<protein>
    <recommendedName>
        <fullName evidence="1">Elongation factor P</fullName>
        <shortName evidence="1">EF-P</shortName>
    </recommendedName>
</protein>
<accession>A5U5N3</accession>
<reference key="1">
    <citation type="journal article" date="2008" name="PLoS ONE">
        <title>Genetic basis of virulence attenuation revealed by comparative genomic analysis of Mycobacterium tuberculosis strain H37Ra versus H37Rv.</title>
        <authorList>
            <person name="Zheng H."/>
            <person name="Lu L."/>
            <person name="Wang B."/>
            <person name="Pu S."/>
            <person name="Zhang X."/>
            <person name="Zhu G."/>
            <person name="Shi W."/>
            <person name="Zhang L."/>
            <person name="Wang H."/>
            <person name="Wang S."/>
            <person name="Zhao G."/>
            <person name="Zhang Y."/>
        </authorList>
    </citation>
    <scope>NUCLEOTIDE SEQUENCE [LARGE SCALE GENOMIC DNA]</scope>
    <source>
        <strain>ATCC 25177 / H37Ra</strain>
    </source>
</reference>
<dbReference type="EMBL" id="CP000611">
    <property type="protein sequence ID" value="ABQ74333.1"/>
    <property type="molecule type" value="Genomic_DNA"/>
</dbReference>
<dbReference type="RefSeq" id="WP_003412989.1">
    <property type="nucleotide sequence ID" value="NZ_CP016972.1"/>
</dbReference>
<dbReference type="SMR" id="A5U5N3"/>
<dbReference type="GeneID" id="45426535"/>
<dbReference type="KEGG" id="mra:MRA_2562"/>
<dbReference type="eggNOG" id="COG0231">
    <property type="taxonomic scope" value="Bacteria"/>
</dbReference>
<dbReference type="HOGENOM" id="CLU_074944_0_1_11"/>
<dbReference type="UniPathway" id="UPA00345"/>
<dbReference type="Proteomes" id="UP000001988">
    <property type="component" value="Chromosome"/>
</dbReference>
<dbReference type="GO" id="GO:0005737">
    <property type="term" value="C:cytoplasm"/>
    <property type="evidence" value="ECO:0007669"/>
    <property type="project" value="UniProtKB-SubCell"/>
</dbReference>
<dbReference type="GO" id="GO:0003746">
    <property type="term" value="F:translation elongation factor activity"/>
    <property type="evidence" value="ECO:0007669"/>
    <property type="project" value="UniProtKB-UniRule"/>
</dbReference>
<dbReference type="GO" id="GO:0043043">
    <property type="term" value="P:peptide biosynthetic process"/>
    <property type="evidence" value="ECO:0007669"/>
    <property type="project" value="InterPro"/>
</dbReference>
<dbReference type="CDD" id="cd04470">
    <property type="entry name" value="S1_EF-P_repeat_1"/>
    <property type="match status" value="1"/>
</dbReference>
<dbReference type="CDD" id="cd05794">
    <property type="entry name" value="S1_EF-P_repeat_2"/>
    <property type="match status" value="1"/>
</dbReference>
<dbReference type="FunFam" id="2.30.30.30:FF:000003">
    <property type="entry name" value="Elongation factor P"/>
    <property type="match status" value="1"/>
</dbReference>
<dbReference type="FunFam" id="2.40.50.140:FF:000004">
    <property type="entry name" value="Elongation factor P"/>
    <property type="match status" value="1"/>
</dbReference>
<dbReference type="FunFam" id="2.40.50.140:FF:000009">
    <property type="entry name" value="Elongation factor P"/>
    <property type="match status" value="1"/>
</dbReference>
<dbReference type="Gene3D" id="2.30.30.30">
    <property type="match status" value="1"/>
</dbReference>
<dbReference type="Gene3D" id="2.40.50.140">
    <property type="entry name" value="Nucleic acid-binding proteins"/>
    <property type="match status" value="2"/>
</dbReference>
<dbReference type="HAMAP" id="MF_00141">
    <property type="entry name" value="EF_P"/>
    <property type="match status" value="1"/>
</dbReference>
<dbReference type="InterPro" id="IPR015365">
    <property type="entry name" value="Elong-fact-P_C"/>
</dbReference>
<dbReference type="InterPro" id="IPR012340">
    <property type="entry name" value="NA-bd_OB-fold"/>
</dbReference>
<dbReference type="InterPro" id="IPR014722">
    <property type="entry name" value="Rib_uL2_dom2"/>
</dbReference>
<dbReference type="InterPro" id="IPR020599">
    <property type="entry name" value="Transl_elong_fac_P/YeiP"/>
</dbReference>
<dbReference type="InterPro" id="IPR013185">
    <property type="entry name" value="Transl_elong_KOW-like"/>
</dbReference>
<dbReference type="InterPro" id="IPR001059">
    <property type="entry name" value="Transl_elong_P/YeiP_cen"/>
</dbReference>
<dbReference type="InterPro" id="IPR013852">
    <property type="entry name" value="Transl_elong_P/YeiP_CS"/>
</dbReference>
<dbReference type="InterPro" id="IPR011768">
    <property type="entry name" value="Transl_elongation_fac_P"/>
</dbReference>
<dbReference type="InterPro" id="IPR008991">
    <property type="entry name" value="Translation_prot_SH3-like_sf"/>
</dbReference>
<dbReference type="NCBIfam" id="TIGR00038">
    <property type="entry name" value="efp"/>
    <property type="match status" value="1"/>
</dbReference>
<dbReference type="NCBIfam" id="NF001810">
    <property type="entry name" value="PRK00529.1"/>
    <property type="match status" value="1"/>
</dbReference>
<dbReference type="PANTHER" id="PTHR30053">
    <property type="entry name" value="ELONGATION FACTOR P"/>
    <property type="match status" value="1"/>
</dbReference>
<dbReference type="PANTHER" id="PTHR30053:SF12">
    <property type="entry name" value="ELONGATION FACTOR P (EF-P) FAMILY PROTEIN"/>
    <property type="match status" value="1"/>
</dbReference>
<dbReference type="Pfam" id="PF01132">
    <property type="entry name" value="EFP"/>
    <property type="match status" value="1"/>
</dbReference>
<dbReference type="Pfam" id="PF08207">
    <property type="entry name" value="EFP_N"/>
    <property type="match status" value="1"/>
</dbReference>
<dbReference type="Pfam" id="PF09285">
    <property type="entry name" value="Elong-fact-P_C"/>
    <property type="match status" value="1"/>
</dbReference>
<dbReference type="PIRSF" id="PIRSF005901">
    <property type="entry name" value="EF-P"/>
    <property type="match status" value="1"/>
</dbReference>
<dbReference type="SMART" id="SM01185">
    <property type="entry name" value="EFP"/>
    <property type="match status" value="1"/>
</dbReference>
<dbReference type="SMART" id="SM00841">
    <property type="entry name" value="Elong-fact-P_C"/>
    <property type="match status" value="1"/>
</dbReference>
<dbReference type="SUPFAM" id="SSF50249">
    <property type="entry name" value="Nucleic acid-binding proteins"/>
    <property type="match status" value="2"/>
</dbReference>
<dbReference type="SUPFAM" id="SSF50104">
    <property type="entry name" value="Translation proteins SH3-like domain"/>
    <property type="match status" value="1"/>
</dbReference>
<dbReference type="PROSITE" id="PS01275">
    <property type="entry name" value="EFP"/>
    <property type="match status" value="1"/>
</dbReference>
<keyword id="KW-0963">Cytoplasm</keyword>
<keyword id="KW-0251">Elongation factor</keyword>
<keyword id="KW-0648">Protein biosynthesis</keyword>
<keyword id="KW-1185">Reference proteome</keyword>
<proteinExistence type="inferred from homology"/>
<evidence type="ECO:0000255" key="1">
    <source>
        <dbReference type="HAMAP-Rule" id="MF_00141"/>
    </source>
</evidence>
<organism>
    <name type="scientific">Mycobacterium tuberculosis (strain ATCC 25177 / H37Ra)</name>
    <dbReference type="NCBI Taxonomy" id="419947"/>
    <lineage>
        <taxon>Bacteria</taxon>
        <taxon>Bacillati</taxon>
        <taxon>Actinomycetota</taxon>
        <taxon>Actinomycetes</taxon>
        <taxon>Mycobacteriales</taxon>
        <taxon>Mycobacteriaceae</taxon>
        <taxon>Mycobacterium</taxon>
        <taxon>Mycobacterium tuberculosis complex</taxon>
    </lineage>
</organism>
<feature type="chain" id="PRO_1000010787" description="Elongation factor P">
    <location>
        <begin position="1"/>
        <end position="187"/>
    </location>
</feature>
<sequence>MATTADFKNGLVLVIDGQLWTITEFQHVKPGKGPAFVRTKLKNVLSGKVVDKTFNAGVKVDTATVDRRDTTYLYRDGSDFVFMDSQDYEQHPLPEALVGDAARFLLEGMPVQVAFHNGVPLYIELPVTVELEVTHTEPGLQGDRSSAGTKPATLQTGAQINVPLFINTGDKLKVDSRDGSYLGRVNA</sequence>
<comment type="function">
    <text evidence="1">Involved in peptide bond synthesis. Stimulates efficient translation and peptide-bond synthesis on native or reconstituted 70S ribosomes in vitro. Probably functions indirectly by altering the affinity of the ribosome for aminoacyl-tRNA, thus increasing their reactivity as acceptors for peptidyl transferase.</text>
</comment>
<comment type="pathway">
    <text evidence="1">Protein biosynthesis; polypeptide chain elongation.</text>
</comment>
<comment type="subcellular location">
    <subcellularLocation>
        <location evidence="1">Cytoplasm</location>
    </subcellularLocation>
</comment>
<comment type="similarity">
    <text evidence="1">Belongs to the elongation factor P family.</text>
</comment>
<gene>
    <name evidence="1" type="primary">efp</name>
    <name type="ordered locus">MRA_2562</name>
</gene>
<name>EFP_MYCTA</name>